<feature type="initiator methionine" description="Removed">
    <location>
        <position position="1"/>
    </location>
</feature>
<feature type="chain" id="PRO_0000251838" description="NADH dehydrogenase [ubiquinone] 1 beta subcomplex subunit 7">
    <location>
        <begin position="2"/>
        <end position="137"/>
    </location>
</feature>
<feature type="domain" description="CHCH" evidence="4">
    <location>
        <begin position="56"/>
        <end position="98"/>
    </location>
</feature>
<feature type="region of interest" description="Disordered" evidence="5">
    <location>
        <begin position="113"/>
        <end position="137"/>
    </location>
</feature>
<feature type="short sequence motif" description="Cx9C motif 1" evidence="4">
    <location>
        <begin position="59"/>
        <end position="69"/>
    </location>
</feature>
<feature type="short sequence motif" description="Cx9C motif 2" evidence="4">
    <location>
        <begin position="80"/>
        <end position="90"/>
    </location>
</feature>
<feature type="modified residue" description="Phosphoserine" evidence="3">
    <location>
        <position position="73"/>
    </location>
</feature>
<feature type="lipid moiety-binding region" description="N-myristoyl glycine" evidence="1">
    <location>
        <position position="2"/>
    </location>
</feature>
<feature type="disulfide bond" evidence="4">
    <location>
        <begin position="59"/>
        <end position="90"/>
    </location>
</feature>
<feature type="disulfide bond" evidence="4">
    <location>
        <begin position="69"/>
        <end position="80"/>
    </location>
</feature>
<protein>
    <recommendedName>
        <fullName>NADH dehydrogenase [ubiquinone] 1 beta subcomplex subunit 7</fullName>
    </recommendedName>
    <alternativeName>
        <fullName>Complex I-B18</fullName>
        <shortName>CI-B18</shortName>
    </alternativeName>
    <alternativeName>
        <fullName>NADH-ubiquinone oxidoreductase B18 subunit</fullName>
    </alternativeName>
</protein>
<keyword id="KW-1015">Disulfide bond</keyword>
<keyword id="KW-0249">Electron transport</keyword>
<keyword id="KW-0449">Lipoprotein</keyword>
<keyword id="KW-0472">Membrane</keyword>
<keyword id="KW-0496">Mitochondrion</keyword>
<keyword id="KW-0999">Mitochondrion inner membrane</keyword>
<keyword id="KW-0519">Myristate</keyword>
<keyword id="KW-0597">Phosphoprotein</keyword>
<keyword id="KW-1185">Reference proteome</keyword>
<keyword id="KW-0679">Respiratory chain</keyword>
<keyword id="KW-0813">Transport</keyword>
<reference key="1">
    <citation type="journal article" date="2006" name="Gene">
        <title>Adaptive selection of mitochondrial complex I subunits during primate radiation.</title>
        <authorList>
            <person name="Mishmar D."/>
            <person name="Ruiz-Pesini E."/>
            <person name="Mondragon-Palomino M."/>
            <person name="Procaccio V."/>
            <person name="Gaut B."/>
            <person name="Wallace D.C."/>
        </authorList>
    </citation>
    <scope>NUCLEOTIDE SEQUENCE [MRNA]</scope>
</reference>
<sequence>MGAHLVRRYLGDASVEPDPLQMPTFPPDYGFPERKEREMVATQQEMMDAQLRLQLRDYCAHYLIRLLKCKRDSFPNFLACKQERHDWDYCEHRDYVMRMKEFERERRLLQRKKRREKKAAELAKGQGPGEVDPKVAL</sequence>
<evidence type="ECO:0000250" key="1"/>
<evidence type="ECO:0000250" key="2">
    <source>
        <dbReference type="UniProtKB" id="P17568"/>
    </source>
</evidence>
<evidence type="ECO:0000250" key="3">
    <source>
        <dbReference type="UniProtKB" id="Q9CR61"/>
    </source>
</evidence>
<evidence type="ECO:0000255" key="4">
    <source>
        <dbReference type="PROSITE-ProRule" id="PRU01150"/>
    </source>
</evidence>
<evidence type="ECO:0000256" key="5">
    <source>
        <dbReference type="SAM" id="MobiDB-lite"/>
    </source>
</evidence>
<evidence type="ECO:0000305" key="6"/>
<accession>Q0MQE3</accession>
<comment type="function">
    <text evidence="2">Accessory subunit of the mitochondrial membrane respiratory chain NADH dehydrogenase (Complex I), that is believed not to be involved in catalysis. Complex I functions in the transfer of electrons from NADH to the respiratory chain. The immediate electron acceptor for the enzyme is believed to be ubiquinone.</text>
</comment>
<comment type="subunit">
    <text evidence="2">Complex I is composed of 45 different subunits.</text>
</comment>
<comment type="subcellular location">
    <subcellularLocation>
        <location evidence="2">Mitochondrion inner membrane</location>
        <topology evidence="2">Peripheral membrane protein</topology>
    </subcellularLocation>
    <subcellularLocation>
        <location evidence="2">Mitochondrion intermembrane space</location>
    </subcellularLocation>
</comment>
<comment type="domain">
    <text evidence="2">Contains two C-X9-C motifs that are predicted to form a helix-coil-helix structure, permitting the formation of intramolecular disulfide bonds.</text>
</comment>
<comment type="similarity">
    <text evidence="6">Belongs to the complex I NDUFB7 subunit family.</text>
</comment>
<proteinExistence type="evidence at transcript level"/>
<gene>
    <name type="primary">NDUFB7</name>
</gene>
<dbReference type="EMBL" id="DQ885691">
    <property type="protein sequence ID" value="ABH12200.1"/>
    <property type="molecule type" value="mRNA"/>
</dbReference>
<dbReference type="RefSeq" id="XP_030860418.1">
    <property type="nucleotide sequence ID" value="XM_031004558.3"/>
</dbReference>
<dbReference type="SMR" id="Q0MQE3"/>
<dbReference type="FunCoup" id="Q0MQE3">
    <property type="interactions" value="1843"/>
</dbReference>
<dbReference type="GeneID" id="115931649"/>
<dbReference type="InParanoid" id="Q0MQE3"/>
<dbReference type="Proteomes" id="UP000001519">
    <property type="component" value="Unplaced"/>
</dbReference>
<dbReference type="GO" id="GO:0005743">
    <property type="term" value="C:mitochondrial inner membrane"/>
    <property type="evidence" value="ECO:0007669"/>
    <property type="project" value="UniProtKB-SubCell"/>
</dbReference>
<dbReference type="GO" id="GO:0005758">
    <property type="term" value="C:mitochondrial intermembrane space"/>
    <property type="evidence" value="ECO:0007669"/>
    <property type="project" value="UniProtKB-SubCell"/>
</dbReference>
<dbReference type="GO" id="GO:0045271">
    <property type="term" value="C:respiratory chain complex I"/>
    <property type="evidence" value="ECO:0000250"/>
    <property type="project" value="UniProtKB"/>
</dbReference>
<dbReference type="InterPro" id="IPR008698">
    <property type="entry name" value="NDUB7"/>
</dbReference>
<dbReference type="PANTHER" id="PTHR20900:SF0">
    <property type="entry name" value="NADH DEHYDROGENASE [UBIQUINONE] 1 BETA SUBCOMPLEX SUBUNIT 7"/>
    <property type="match status" value="1"/>
</dbReference>
<dbReference type="PANTHER" id="PTHR20900">
    <property type="entry name" value="NADH:UBIQUINONE OXIDOREDUCTASE B18-LIKE SUBUNIT"/>
    <property type="match status" value="1"/>
</dbReference>
<dbReference type="Pfam" id="PF05676">
    <property type="entry name" value="NDUF_B7"/>
    <property type="match status" value="1"/>
</dbReference>
<dbReference type="PROSITE" id="PS51808">
    <property type="entry name" value="CHCH"/>
    <property type="match status" value="1"/>
</dbReference>
<organism>
    <name type="scientific">Gorilla gorilla gorilla</name>
    <name type="common">Western lowland gorilla</name>
    <dbReference type="NCBI Taxonomy" id="9595"/>
    <lineage>
        <taxon>Eukaryota</taxon>
        <taxon>Metazoa</taxon>
        <taxon>Chordata</taxon>
        <taxon>Craniata</taxon>
        <taxon>Vertebrata</taxon>
        <taxon>Euteleostomi</taxon>
        <taxon>Mammalia</taxon>
        <taxon>Eutheria</taxon>
        <taxon>Euarchontoglires</taxon>
        <taxon>Primates</taxon>
        <taxon>Haplorrhini</taxon>
        <taxon>Catarrhini</taxon>
        <taxon>Hominidae</taxon>
        <taxon>Gorilla</taxon>
    </lineage>
</organism>
<name>NDUB7_GORGO</name>